<gene>
    <name type="primary">pns-1</name>
    <name type="ORF">B14A21.150</name>
    <name type="ORF">NCU08895</name>
</gene>
<reference key="1">
    <citation type="journal article" date="2003" name="Nucleic Acids Res.">
        <title>What's in the genome of a filamentous fungus? Analysis of the Neurospora genome sequence.</title>
        <authorList>
            <person name="Mannhaupt G."/>
            <person name="Montrone C."/>
            <person name="Haase D."/>
            <person name="Mewes H.-W."/>
            <person name="Aign V."/>
            <person name="Hoheisel J.D."/>
            <person name="Fartmann B."/>
            <person name="Nyakatura G."/>
            <person name="Kempken F."/>
            <person name="Maier J."/>
            <person name="Schulte U."/>
        </authorList>
    </citation>
    <scope>NUCLEOTIDE SEQUENCE [LARGE SCALE GENOMIC DNA]</scope>
    <source>
        <strain>ATCC 24698 / 74-OR23-1A / CBS 708.71 / DSM 1257 / FGSC 987</strain>
    </source>
</reference>
<reference key="2">
    <citation type="journal article" date="2003" name="Nature">
        <title>The genome sequence of the filamentous fungus Neurospora crassa.</title>
        <authorList>
            <person name="Galagan J.E."/>
            <person name="Calvo S.E."/>
            <person name="Borkovich K.A."/>
            <person name="Selker E.U."/>
            <person name="Read N.D."/>
            <person name="Jaffe D.B."/>
            <person name="FitzHugh W."/>
            <person name="Ma L.-J."/>
            <person name="Smirnov S."/>
            <person name="Purcell S."/>
            <person name="Rehman B."/>
            <person name="Elkins T."/>
            <person name="Engels R."/>
            <person name="Wang S."/>
            <person name="Nielsen C.B."/>
            <person name="Butler J."/>
            <person name="Endrizzi M."/>
            <person name="Qui D."/>
            <person name="Ianakiev P."/>
            <person name="Bell-Pedersen D."/>
            <person name="Nelson M.A."/>
            <person name="Werner-Washburne M."/>
            <person name="Selitrennikoff C.P."/>
            <person name="Kinsey J.A."/>
            <person name="Braun E.L."/>
            <person name="Zelter A."/>
            <person name="Schulte U."/>
            <person name="Kothe G.O."/>
            <person name="Jedd G."/>
            <person name="Mewes H.-W."/>
            <person name="Staben C."/>
            <person name="Marcotte E."/>
            <person name="Greenberg D."/>
            <person name="Roy A."/>
            <person name="Foley K."/>
            <person name="Naylor J."/>
            <person name="Stange-Thomann N."/>
            <person name="Barrett R."/>
            <person name="Gnerre S."/>
            <person name="Kamal M."/>
            <person name="Kamvysselis M."/>
            <person name="Mauceli E.W."/>
            <person name="Bielke C."/>
            <person name="Rudd S."/>
            <person name="Frishman D."/>
            <person name="Krystofova S."/>
            <person name="Rasmussen C."/>
            <person name="Metzenberg R.L."/>
            <person name="Perkins D.D."/>
            <person name="Kroken S."/>
            <person name="Cogoni C."/>
            <person name="Macino G."/>
            <person name="Catcheside D.E.A."/>
            <person name="Li W."/>
            <person name="Pratt R.J."/>
            <person name="Osmani S.A."/>
            <person name="DeSouza C.P.C."/>
            <person name="Glass N.L."/>
            <person name="Orbach M.J."/>
            <person name="Berglund J.A."/>
            <person name="Voelker R."/>
            <person name="Yarden O."/>
            <person name="Plamann M."/>
            <person name="Seiler S."/>
            <person name="Dunlap J.C."/>
            <person name="Radford A."/>
            <person name="Aramayo R."/>
            <person name="Natvig D.O."/>
            <person name="Alex L.A."/>
            <person name="Mannhaupt G."/>
            <person name="Ebbole D.J."/>
            <person name="Freitag M."/>
            <person name="Paulsen I."/>
            <person name="Sachs M.S."/>
            <person name="Lander E.S."/>
            <person name="Nusbaum C."/>
            <person name="Birren B.W."/>
        </authorList>
    </citation>
    <scope>NUCLEOTIDE SEQUENCE [LARGE SCALE GENOMIC DNA]</scope>
    <source>
        <strain>ATCC 24698 / 74-OR23-1A / CBS 708.71 / DSM 1257 / FGSC 987</strain>
    </source>
</reference>
<organism>
    <name type="scientific">Neurospora crassa (strain ATCC 24698 / 74-OR23-1A / CBS 708.71 / DSM 1257 / FGSC 987)</name>
    <dbReference type="NCBI Taxonomy" id="367110"/>
    <lineage>
        <taxon>Eukaryota</taxon>
        <taxon>Fungi</taxon>
        <taxon>Dikarya</taxon>
        <taxon>Ascomycota</taxon>
        <taxon>Pezizomycotina</taxon>
        <taxon>Sordariomycetes</taxon>
        <taxon>Sordariomycetidae</taxon>
        <taxon>Sordariales</taxon>
        <taxon>Sordariaceae</taxon>
        <taxon>Neurospora</taxon>
    </lineage>
</organism>
<dbReference type="EMBL" id="BX294091">
    <property type="protein sequence ID" value="CAD71229.1"/>
    <property type="molecule type" value="Genomic_DNA"/>
</dbReference>
<dbReference type="EMBL" id="CM002240">
    <property type="protein sequence ID" value="EAA29597.1"/>
    <property type="molecule type" value="Genomic_DNA"/>
</dbReference>
<dbReference type="RefSeq" id="XP_958833.1">
    <property type="nucleotide sequence ID" value="XM_953740.3"/>
</dbReference>
<dbReference type="SMR" id="Q870V7"/>
<dbReference type="FunCoup" id="Q870V7">
    <property type="interactions" value="220"/>
</dbReference>
<dbReference type="STRING" id="367110.Q870V7"/>
<dbReference type="GlyCosmos" id="Q870V7">
    <property type="glycosylation" value="2 sites, No reported glycans"/>
</dbReference>
<dbReference type="PaxDb" id="5141-EFNCRP00000008849"/>
<dbReference type="EnsemblFungi" id="EAA29597">
    <property type="protein sequence ID" value="EAA29597"/>
    <property type="gene ID" value="NCU08895"/>
</dbReference>
<dbReference type="GeneID" id="3874980"/>
<dbReference type="KEGG" id="ncr:NCU08895"/>
<dbReference type="VEuPathDB" id="FungiDB:NCU08895"/>
<dbReference type="HOGENOM" id="CLU_026724_0_0_1"/>
<dbReference type="InParanoid" id="Q870V7"/>
<dbReference type="OMA" id="DTIFVAM"/>
<dbReference type="OrthoDB" id="44736at2759"/>
<dbReference type="Proteomes" id="UP000001805">
    <property type="component" value="Chromosome 2, Linkage Group V"/>
</dbReference>
<dbReference type="GO" id="GO:0016020">
    <property type="term" value="C:membrane"/>
    <property type="evidence" value="ECO:0000318"/>
    <property type="project" value="GO_Central"/>
</dbReference>
<dbReference type="GO" id="GO:0005886">
    <property type="term" value="C:plasma membrane"/>
    <property type="evidence" value="ECO:0007669"/>
    <property type="project" value="UniProtKB-SubCell"/>
</dbReference>
<dbReference type="GO" id="GO:0022857">
    <property type="term" value="F:transmembrane transporter activity"/>
    <property type="evidence" value="ECO:0000318"/>
    <property type="project" value="GO_Central"/>
</dbReference>
<dbReference type="GO" id="GO:0055085">
    <property type="term" value="P:transmembrane transport"/>
    <property type="evidence" value="ECO:0000318"/>
    <property type="project" value="GO_Central"/>
</dbReference>
<dbReference type="InterPro" id="IPR007603">
    <property type="entry name" value="Choline_transptr-like"/>
</dbReference>
<dbReference type="PANTHER" id="PTHR12385">
    <property type="entry name" value="CHOLINE TRANSPORTER-LIKE (SLC FAMILY 44)"/>
    <property type="match status" value="1"/>
</dbReference>
<dbReference type="PANTHER" id="PTHR12385:SF4">
    <property type="entry name" value="PROTEIN PNS1"/>
    <property type="match status" value="1"/>
</dbReference>
<dbReference type="Pfam" id="PF04515">
    <property type="entry name" value="Choline_transpo"/>
    <property type="match status" value="1"/>
</dbReference>
<protein>
    <recommendedName>
        <fullName>Protein PNS1</fullName>
    </recommendedName>
</protein>
<comment type="function">
    <text evidence="1">Probably involved in transport through the plasma membrane.</text>
</comment>
<comment type="subcellular location">
    <subcellularLocation>
        <location evidence="1">Cell membrane</location>
        <topology evidence="1">Multi-pass membrane protein</topology>
    </subcellularLocation>
</comment>
<comment type="similarity">
    <text evidence="4">Belongs to the CTL (choline transporter-like) family.</text>
</comment>
<evidence type="ECO:0000250" key="1"/>
<evidence type="ECO:0000255" key="2"/>
<evidence type="ECO:0000256" key="3">
    <source>
        <dbReference type="SAM" id="MobiDB-lite"/>
    </source>
</evidence>
<evidence type="ECO:0000305" key="4"/>
<keyword id="KW-1003">Cell membrane</keyword>
<keyword id="KW-0325">Glycoprotein</keyword>
<keyword id="KW-0472">Membrane</keyword>
<keyword id="KW-1185">Reference proteome</keyword>
<keyword id="KW-0812">Transmembrane</keyword>
<keyword id="KW-1133">Transmembrane helix</keyword>
<keyword id="KW-0813">Transport</keyword>
<name>PNS1_NEUCR</name>
<proteinExistence type="inferred from homology"/>
<accession>Q870V7</accession>
<accession>Q1K697</accession>
<sequence>MSGPQYGAQPGGYYNNNNNYPPPPPNSYQMNPMPTDGNYGQQPQYGYGGGPPPQQYGNGYGDGGYAPPQGPPPNGSKPPPTDGYGGPPPSYDEVFKVQKPKYNDWWAGLLFLATVAGFVAVSAISIHGYADNRSQNNGSLNGQRNTFGLTTHTIYLFVWVLICAIVLSYAYMWMARKFTKQFIYATGILNIVMGLVTALYMLSRKYWSGGIVFLIFVVLQALFFWSCRSRIPFSTLMLQTAIDVSKVHGHVYLVSAVGGVIGTLFAAYWAITLVAVYVKFEPDPNNAACRNAGGCSSGKVIGLIVFITFAGYWISEWLKNTIHTTVAGIYGSWYFNSRNYPTKVTRGALKRSLTYSFGSISLGSLFIAIINLIRQLAQAAQQNAAQEGDILGTILWCIFGCLIGILDWLVEFINRYAFCHIALYGKAYFAAAKDTWKMVKDRGIDALINECLIGPVLTFGATFVAYACGLIAYLYMVYTKPAYNDGGGFTPVVVAFAFLIGLQVCNVFTTPLTSGIDTIFVAMAWDPEVLMRDHPDLYHRMVQVYPHVQEAIHA</sequence>
<feature type="chain" id="PRO_0000191737" description="Protein PNS1">
    <location>
        <begin position="1"/>
        <end position="554"/>
    </location>
</feature>
<feature type="topological domain" description="Cytoplasmic" evidence="2">
    <location>
        <begin position="1"/>
        <end position="105"/>
    </location>
</feature>
<feature type="transmembrane region" description="Helical" evidence="2">
    <location>
        <begin position="106"/>
        <end position="126"/>
    </location>
</feature>
<feature type="topological domain" description="Extracellular" evidence="2">
    <location>
        <begin position="127"/>
        <end position="153"/>
    </location>
</feature>
<feature type="transmembrane region" description="Helical" evidence="2">
    <location>
        <begin position="154"/>
        <end position="174"/>
    </location>
</feature>
<feature type="topological domain" description="Cytoplasmic" evidence="2">
    <location>
        <begin position="175"/>
        <end position="181"/>
    </location>
</feature>
<feature type="transmembrane region" description="Helical" evidence="2">
    <location>
        <begin position="182"/>
        <end position="202"/>
    </location>
</feature>
<feature type="topological domain" description="Extracellular" evidence="2">
    <location>
        <begin position="203"/>
        <end position="206"/>
    </location>
</feature>
<feature type="transmembrane region" description="Helical" evidence="2">
    <location>
        <begin position="207"/>
        <end position="227"/>
    </location>
</feature>
<feature type="topological domain" description="Cytoplasmic" evidence="2">
    <location>
        <begin position="228"/>
        <end position="255"/>
    </location>
</feature>
<feature type="transmembrane region" description="Helical" evidence="2">
    <location>
        <begin position="256"/>
        <end position="276"/>
    </location>
</feature>
<feature type="topological domain" description="Extracellular" evidence="2">
    <location>
        <begin position="277"/>
        <end position="297"/>
    </location>
</feature>
<feature type="transmembrane region" description="Helical" evidence="2">
    <location>
        <begin position="298"/>
        <end position="318"/>
    </location>
</feature>
<feature type="topological domain" description="Cytoplasmic" evidence="2">
    <location>
        <begin position="319"/>
        <end position="352"/>
    </location>
</feature>
<feature type="transmembrane region" description="Helical" evidence="2">
    <location>
        <begin position="353"/>
        <end position="373"/>
    </location>
</feature>
<feature type="topological domain" description="Extracellular" evidence="2">
    <location>
        <begin position="374"/>
        <end position="389"/>
    </location>
</feature>
<feature type="transmembrane region" description="Helical" evidence="2">
    <location>
        <begin position="390"/>
        <end position="410"/>
    </location>
</feature>
<feature type="topological domain" description="Cytoplasmic" evidence="2">
    <location>
        <begin position="411"/>
        <end position="451"/>
    </location>
</feature>
<feature type="transmembrane region" description="Helical" evidence="2">
    <location>
        <begin position="452"/>
        <end position="472"/>
    </location>
</feature>
<feature type="topological domain" description="Extracellular" evidence="2">
    <location>
        <begin position="473"/>
        <end position="487"/>
    </location>
</feature>
<feature type="transmembrane region" description="Helical" evidence="2">
    <location>
        <begin position="488"/>
        <end position="508"/>
    </location>
</feature>
<feature type="topological domain" description="Cytoplasmic" evidence="2">
    <location>
        <begin position="509"/>
        <end position="554"/>
    </location>
</feature>
<feature type="region of interest" description="Disordered" evidence="3">
    <location>
        <begin position="1"/>
        <end position="90"/>
    </location>
</feature>
<feature type="compositionally biased region" description="Low complexity" evidence="3">
    <location>
        <begin position="1"/>
        <end position="19"/>
    </location>
</feature>
<feature type="compositionally biased region" description="Low complexity" evidence="3">
    <location>
        <begin position="27"/>
        <end position="45"/>
    </location>
</feature>
<feature type="compositionally biased region" description="Pro residues" evidence="3">
    <location>
        <begin position="68"/>
        <end position="90"/>
    </location>
</feature>
<feature type="glycosylation site" description="N-linked (GlcNAc...) asparagine" evidence="2">
    <location>
        <position position="132"/>
    </location>
</feature>
<feature type="glycosylation site" description="N-linked (GlcNAc...) asparagine" evidence="2">
    <location>
        <position position="137"/>
    </location>
</feature>